<keyword id="KW-0963">Cytoplasm</keyword>
<keyword id="KW-0396">Initiation factor</keyword>
<keyword id="KW-0648">Protein biosynthesis</keyword>
<keyword id="KW-1185">Reference proteome</keyword>
<keyword id="KW-0694">RNA-binding</keyword>
<keyword id="KW-0699">rRNA-binding</keyword>
<sequence length="72" mass="8220">MAKEDVIEMQGTVQDTLPNTMFRVELENGHVVTAHISGKMRKNYIRILTGDKVTVELTPYDLSKGRIVFRAR</sequence>
<protein>
    <recommendedName>
        <fullName evidence="1">Translation initiation factor IF-1</fullName>
    </recommendedName>
</protein>
<dbReference type="EMBL" id="CR378666">
    <property type="protein sequence ID" value="CAG19564.1"/>
    <property type="molecule type" value="Genomic_DNA"/>
</dbReference>
<dbReference type="RefSeq" id="WP_011217896.1">
    <property type="nucleotide sequence ID" value="NC_006370.1"/>
</dbReference>
<dbReference type="SMR" id="Q6LT12"/>
<dbReference type="STRING" id="298386.PBPRA1153"/>
<dbReference type="KEGG" id="ppr:PBPRA1153"/>
<dbReference type="eggNOG" id="COG0361">
    <property type="taxonomic scope" value="Bacteria"/>
</dbReference>
<dbReference type="HOGENOM" id="CLU_151267_1_0_6"/>
<dbReference type="Proteomes" id="UP000000593">
    <property type="component" value="Chromosome 1"/>
</dbReference>
<dbReference type="GO" id="GO:0005829">
    <property type="term" value="C:cytosol"/>
    <property type="evidence" value="ECO:0007669"/>
    <property type="project" value="TreeGrafter"/>
</dbReference>
<dbReference type="GO" id="GO:0043022">
    <property type="term" value="F:ribosome binding"/>
    <property type="evidence" value="ECO:0007669"/>
    <property type="project" value="UniProtKB-UniRule"/>
</dbReference>
<dbReference type="GO" id="GO:0019843">
    <property type="term" value="F:rRNA binding"/>
    <property type="evidence" value="ECO:0007669"/>
    <property type="project" value="UniProtKB-UniRule"/>
</dbReference>
<dbReference type="GO" id="GO:0003743">
    <property type="term" value="F:translation initiation factor activity"/>
    <property type="evidence" value="ECO:0007669"/>
    <property type="project" value="UniProtKB-UniRule"/>
</dbReference>
<dbReference type="CDD" id="cd04451">
    <property type="entry name" value="S1_IF1"/>
    <property type="match status" value="1"/>
</dbReference>
<dbReference type="FunFam" id="2.40.50.140:FF:000002">
    <property type="entry name" value="Translation initiation factor IF-1"/>
    <property type="match status" value="1"/>
</dbReference>
<dbReference type="Gene3D" id="2.40.50.140">
    <property type="entry name" value="Nucleic acid-binding proteins"/>
    <property type="match status" value="1"/>
</dbReference>
<dbReference type="HAMAP" id="MF_00075">
    <property type="entry name" value="IF_1"/>
    <property type="match status" value="1"/>
</dbReference>
<dbReference type="InterPro" id="IPR012340">
    <property type="entry name" value="NA-bd_OB-fold"/>
</dbReference>
<dbReference type="InterPro" id="IPR006196">
    <property type="entry name" value="RNA-binding_domain_S1_IF1"/>
</dbReference>
<dbReference type="InterPro" id="IPR003029">
    <property type="entry name" value="S1_domain"/>
</dbReference>
<dbReference type="InterPro" id="IPR004368">
    <property type="entry name" value="TIF_IF1"/>
</dbReference>
<dbReference type="NCBIfam" id="TIGR00008">
    <property type="entry name" value="infA"/>
    <property type="match status" value="1"/>
</dbReference>
<dbReference type="PANTHER" id="PTHR33370">
    <property type="entry name" value="TRANSLATION INITIATION FACTOR IF-1, CHLOROPLASTIC"/>
    <property type="match status" value="1"/>
</dbReference>
<dbReference type="PANTHER" id="PTHR33370:SF1">
    <property type="entry name" value="TRANSLATION INITIATION FACTOR IF-1, CHLOROPLASTIC"/>
    <property type="match status" value="1"/>
</dbReference>
<dbReference type="Pfam" id="PF01176">
    <property type="entry name" value="eIF-1a"/>
    <property type="match status" value="1"/>
</dbReference>
<dbReference type="SMART" id="SM00316">
    <property type="entry name" value="S1"/>
    <property type="match status" value="1"/>
</dbReference>
<dbReference type="SUPFAM" id="SSF50249">
    <property type="entry name" value="Nucleic acid-binding proteins"/>
    <property type="match status" value="1"/>
</dbReference>
<dbReference type="PROSITE" id="PS50832">
    <property type="entry name" value="S1_IF1_TYPE"/>
    <property type="match status" value="1"/>
</dbReference>
<accession>Q6LT12</accession>
<feature type="chain" id="PRO_0000095841" description="Translation initiation factor IF-1">
    <location>
        <begin position="1"/>
        <end position="72"/>
    </location>
</feature>
<feature type="domain" description="S1-like" evidence="1">
    <location>
        <begin position="1"/>
        <end position="72"/>
    </location>
</feature>
<organism>
    <name type="scientific">Photobacterium profundum (strain SS9)</name>
    <dbReference type="NCBI Taxonomy" id="298386"/>
    <lineage>
        <taxon>Bacteria</taxon>
        <taxon>Pseudomonadati</taxon>
        <taxon>Pseudomonadota</taxon>
        <taxon>Gammaproteobacteria</taxon>
        <taxon>Vibrionales</taxon>
        <taxon>Vibrionaceae</taxon>
        <taxon>Photobacterium</taxon>
    </lineage>
</organism>
<evidence type="ECO:0000255" key="1">
    <source>
        <dbReference type="HAMAP-Rule" id="MF_00075"/>
    </source>
</evidence>
<name>IF1_PHOPR</name>
<proteinExistence type="inferred from homology"/>
<reference key="1">
    <citation type="journal article" date="2005" name="Science">
        <title>Life at depth: Photobacterium profundum genome sequence and expression analysis.</title>
        <authorList>
            <person name="Vezzi A."/>
            <person name="Campanaro S."/>
            <person name="D'Angelo M."/>
            <person name="Simonato F."/>
            <person name="Vitulo N."/>
            <person name="Lauro F.M."/>
            <person name="Cestaro A."/>
            <person name="Malacrida G."/>
            <person name="Simionati B."/>
            <person name="Cannata N."/>
            <person name="Romualdi C."/>
            <person name="Bartlett D.H."/>
            <person name="Valle G."/>
        </authorList>
    </citation>
    <scope>NUCLEOTIDE SEQUENCE [LARGE SCALE GENOMIC DNA]</scope>
    <source>
        <strain>ATCC BAA-1253 / SS9</strain>
    </source>
</reference>
<comment type="function">
    <text evidence="1">One of the essential components for the initiation of protein synthesis. Stabilizes the binding of IF-2 and IF-3 on the 30S subunit to which N-formylmethionyl-tRNA(fMet) subsequently binds. Helps modulate mRNA selection, yielding the 30S pre-initiation complex (PIC). Upon addition of the 50S ribosomal subunit IF-1, IF-2 and IF-3 are released leaving the mature 70S translation initiation complex.</text>
</comment>
<comment type="subunit">
    <text evidence="1">Component of the 30S ribosomal translation pre-initiation complex which assembles on the 30S ribosome in the order IF-2 and IF-3, IF-1 and N-formylmethionyl-tRNA(fMet); mRNA recruitment can occur at any time during PIC assembly.</text>
</comment>
<comment type="subcellular location">
    <subcellularLocation>
        <location evidence="1">Cytoplasm</location>
    </subcellularLocation>
</comment>
<comment type="similarity">
    <text evidence="1">Belongs to the IF-1 family.</text>
</comment>
<gene>
    <name evidence="1" type="primary">infA</name>
    <name type="ordered locus">PBPRA1153</name>
</gene>